<evidence type="ECO:0000255" key="1">
    <source>
        <dbReference type="HAMAP-Rule" id="MF_01538"/>
    </source>
</evidence>
<keyword id="KW-1185">Reference proteome</keyword>
<accession>Q04F46</accession>
<gene>
    <name type="ordered locus">OEOE_1017</name>
</gene>
<proteinExistence type="inferred from homology"/>
<comment type="similarity">
    <text evidence="1">Belongs to the UPF0346 family.</text>
</comment>
<organism>
    <name type="scientific">Oenococcus oeni (strain ATCC BAA-331 / PSU-1)</name>
    <dbReference type="NCBI Taxonomy" id="203123"/>
    <lineage>
        <taxon>Bacteria</taxon>
        <taxon>Bacillati</taxon>
        <taxon>Bacillota</taxon>
        <taxon>Bacilli</taxon>
        <taxon>Lactobacillales</taxon>
        <taxon>Lactobacillaceae</taxon>
        <taxon>Oenococcus</taxon>
    </lineage>
</organism>
<dbReference type="EMBL" id="CP000411">
    <property type="protein sequence ID" value="ABJ56926.1"/>
    <property type="molecule type" value="Genomic_DNA"/>
</dbReference>
<dbReference type="RefSeq" id="WP_002817141.1">
    <property type="nucleotide sequence ID" value="NC_008528.1"/>
</dbReference>
<dbReference type="SMR" id="Q04F46"/>
<dbReference type="STRING" id="203123.OEOE_1017"/>
<dbReference type="KEGG" id="ooe:OEOE_1017"/>
<dbReference type="eggNOG" id="COG4479">
    <property type="taxonomic scope" value="Bacteria"/>
</dbReference>
<dbReference type="HOGENOM" id="CLU_177534_1_0_9"/>
<dbReference type="Proteomes" id="UP000000774">
    <property type="component" value="Chromosome"/>
</dbReference>
<dbReference type="Gene3D" id="1.10.150.260">
    <property type="entry name" value="YozE SAM-like"/>
    <property type="match status" value="1"/>
</dbReference>
<dbReference type="HAMAP" id="MF_01538">
    <property type="entry name" value="UPF0346"/>
    <property type="match status" value="1"/>
</dbReference>
<dbReference type="InterPro" id="IPR010673">
    <property type="entry name" value="UPF0346"/>
</dbReference>
<dbReference type="InterPro" id="IPR023089">
    <property type="entry name" value="YozE_SAM-like"/>
</dbReference>
<dbReference type="InterPro" id="IPR036806">
    <property type="entry name" value="YozE_SAM-like_sf"/>
</dbReference>
<dbReference type="NCBIfam" id="NF010193">
    <property type="entry name" value="PRK13672.1"/>
    <property type="match status" value="1"/>
</dbReference>
<dbReference type="Pfam" id="PF06855">
    <property type="entry name" value="YozE_SAM_like"/>
    <property type="match status" value="1"/>
</dbReference>
<dbReference type="PIRSF" id="PIRSF037262">
    <property type="entry name" value="UCP037262"/>
    <property type="match status" value="1"/>
</dbReference>
<dbReference type="SUPFAM" id="SSF140652">
    <property type="entry name" value="YozE-like"/>
    <property type="match status" value="1"/>
</dbReference>
<sequence>MRSRGFYEWLMTQRKPENADEVQEFANAAFFDSEFPKQSQNFDEISKYLEENAPYLMSMEVFDEAWRRFLASEEEL</sequence>
<protein>
    <recommendedName>
        <fullName evidence="1">UPF0346 protein OEOE_1017</fullName>
    </recommendedName>
</protein>
<feature type="chain" id="PRO_0000292796" description="UPF0346 protein OEOE_1017">
    <location>
        <begin position="1"/>
        <end position="76"/>
    </location>
</feature>
<reference key="1">
    <citation type="journal article" date="2006" name="Proc. Natl. Acad. Sci. U.S.A.">
        <title>Comparative genomics of the lactic acid bacteria.</title>
        <authorList>
            <person name="Makarova K.S."/>
            <person name="Slesarev A."/>
            <person name="Wolf Y.I."/>
            <person name="Sorokin A."/>
            <person name="Mirkin B."/>
            <person name="Koonin E.V."/>
            <person name="Pavlov A."/>
            <person name="Pavlova N."/>
            <person name="Karamychev V."/>
            <person name="Polouchine N."/>
            <person name="Shakhova V."/>
            <person name="Grigoriev I."/>
            <person name="Lou Y."/>
            <person name="Rohksar D."/>
            <person name="Lucas S."/>
            <person name="Huang K."/>
            <person name="Goodstein D.M."/>
            <person name="Hawkins T."/>
            <person name="Plengvidhya V."/>
            <person name="Welker D."/>
            <person name="Hughes J."/>
            <person name="Goh Y."/>
            <person name="Benson A."/>
            <person name="Baldwin K."/>
            <person name="Lee J.-H."/>
            <person name="Diaz-Muniz I."/>
            <person name="Dosti B."/>
            <person name="Smeianov V."/>
            <person name="Wechter W."/>
            <person name="Barabote R."/>
            <person name="Lorca G."/>
            <person name="Altermann E."/>
            <person name="Barrangou R."/>
            <person name="Ganesan B."/>
            <person name="Xie Y."/>
            <person name="Rawsthorne H."/>
            <person name="Tamir D."/>
            <person name="Parker C."/>
            <person name="Breidt F."/>
            <person name="Broadbent J.R."/>
            <person name="Hutkins R."/>
            <person name="O'Sullivan D."/>
            <person name="Steele J."/>
            <person name="Unlu G."/>
            <person name="Saier M.H. Jr."/>
            <person name="Klaenhammer T."/>
            <person name="Richardson P."/>
            <person name="Kozyavkin S."/>
            <person name="Weimer B.C."/>
            <person name="Mills D.A."/>
        </authorList>
    </citation>
    <scope>NUCLEOTIDE SEQUENCE [LARGE SCALE GENOMIC DNA]</scope>
    <source>
        <strain>ATCC BAA-331 / PSU-1</strain>
    </source>
</reference>
<name>Y1017_OENOB</name>